<protein>
    <recommendedName>
        <fullName>Uncharacterized protein YjaV</fullName>
    </recommendedName>
</protein>
<dbReference type="EMBL" id="AL009126">
    <property type="protein sequence ID" value="CAB12970.2"/>
    <property type="molecule type" value="Genomic_DNA"/>
</dbReference>
<dbReference type="PIR" id="E69842">
    <property type="entry name" value="E69842"/>
</dbReference>
<dbReference type="RefSeq" id="NP_389011.2">
    <property type="nucleotide sequence ID" value="NC_000964.3"/>
</dbReference>
<dbReference type="RefSeq" id="WP_003232974.1">
    <property type="nucleotide sequence ID" value="NZ_OZ025638.1"/>
</dbReference>
<dbReference type="FunCoup" id="O34959">
    <property type="interactions" value="23"/>
</dbReference>
<dbReference type="STRING" id="224308.BSU11290"/>
<dbReference type="PaxDb" id="224308-BSU11290"/>
<dbReference type="EnsemblBacteria" id="CAB12970">
    <property type="protein sequence ID" value="CAB12970"/>
    <property type="gene ID" value="BSU_11290"/>
</dbReference>
<dbReference type="GeneID" id="939802"/>
<dbReference type="KEGG" id="bsu:BSU11290"/>
<dbReference type="PATRIC" id="fig|224308.179.peg.1214"/>
<dbReference type="eggNOG" id="ENOG5030IFG">
    <property type="taxonomic scope" value="Bacteria"/>
</dbReference>
<dbReference type="InParanoid" id="O34959"/>
<dbReference type="OrthoDB" id="2938417at2"/>
<dbReference type="BioCyc" id="BSUB:BSU11290-MONOMER"/>
<dbReference type="Proteomes" id="UP000001570">
    <property type="component" value="Chromosome"/>
</dbReference>
<feature type="chain" id="PRO_0000049593" description="Uncharacterized protein YjaV">
    <location>
        <begin position="1"/>
        <end position="185"/>
    </location>
</feature>
<accession>O34959</accession>
<reference key="1">
    <citation type="journal article" date="1997" name="Nature">
        <title>The complete genome sequence of the Gram-positive bacterium Bacillus subtilis.</title>
        <authorList>
            <person name="Kunst F."/>
            <person name="Ogasawara N."/>
            <person name="Moszer I."/>
            <person name="Albertini A.M."/>
            <person name="Alloni G."/>
            <person name="Azevedo V."/>
            <person name="Bertero M.G."/>
            <person name="Bessieres P."/>
            <person name="Bolotin A."/>
            <person name="Borchert S."/>
            <person name="Borriss R."/>
            <person name="Boursier L."/>
            <person name="Brans A."/>
            <person name="Braun M."/>
            <person name="Brignell S.C."/>
            <person name="Bron S."/>
            <person name="Brouillet S."/>
            <person name="Bruschi C.V."/>
            <person name="Caldwell B."/>
            <person name="Capuano V."/>
            <person name="Carter N.M."/>
            <person name="Choi S.-K."/>
            <person name="Codani J.-J."/>
            <person name="Connerton I.F."/>
            <person name="Cummings N.J."/>
            <person name="Daniel R.A."/>
            <person name="Denizot F."/>
            <person name="Devine K.M."/>
            <person name="Duesterhoeft A."/>
            <person name="Ehrlich S.D."/>
            <person name="Emmerson P.T."/>
            <person name="Entian K.-D."/>
            <person name="Errington J."/>
            <person name="Fabret C."/>
            <person name="Ferrari E."/>
            <person name="Foulger D."/>
            <person name="Fritz C."/>
            <person name="Fujita M."/>
            <person name="Fujita Y."/>
            <person name="Fuma S."/>
            <person name="Galizzi A."/>
            <person name="Galleron N."/>
            <person name="Ghim S.-Y."/>
            <person name="Glaser P."/>
            <person name="Goffeau A."/>
            <person name="Golightly E.J."/>
            <person name="Grandi G."/>
            <person name="Guiseppi G."/>
            <person name="Guy B.J."/>
            <person name="Haga K."/>
            <person name="Haiech J."/>
            <person name="Harwood C.R."/>
            <person name="Henaut A."/>
            <person name="Hilbert H."/>
            <person name="Holsappel S."/>
            <person name="Hosono S."/>
            <person name="Hullo M.-F."/>
            <person name="Itaya M."/>
            <person name="Jones L.-M."/>
            <person name="Joris B."/>
            <person name="Karamata D."/>
            <person name="Kasahara Y."/>
            <person name="Klaerr-Blanchard M."/>
            <person name="Klein C."/>
            <person name="Kobayashi Y."/>
            <person name="Koetter P."/>
            <person name="Koningstein G."/>
            <person name="Krogh S."/>
            <person name="Kumano M."/>
            <person name="Kurita K."/>
            <person name="Lapidus A."/>
            <person name="Lardinois S."/>
            <person name="Lauber J."/>
            <person name="Lazarevic V."/>
            <person name="Lee S.-M."/>
            <person name="Levine A."/>
            <person name="Liu H."/>
            <person name="Masuda S."/>
            <person name="Mauel C."/>
            <person name="Medigue C."/>
            <person name="Medina N."/>
            <person name="Mellado R.P."/>
            <person name="Mizuno M."/>
            <person name="Moestl D."/>
            <person name="Nakai S."/>
            <person name="Noback M."/>
            <person name="Noone D."/>
            <person name="O'Reilly M."/>
            <person name="Ogawa K."/>
            <person name="Ogiwara A."/>
            <person name="Oudega B."/>
            <person name="Park S.-H."/>
            <person name="Parro V."/>
            <person name="Pohl T.M."/>
            <person name="Portetelle D."/>
            <person name="Porwollik S."/>
            <person name="Prescott A.M."/>
            <person name="Presecan E."/>
            <person name="Pujic P."/>
            <person name="Purnelle B."/>
            <person name="Rapoport G."/>
            <person name="Rey M."/>
            <person name="Reynolds S."/>
            <person name="Rieger M."/>
            <person name="Rivolta C."/>
            <person name="Rocha E."/>
            <person name="Roche B."/>
            <person name="Rose M."/>
            <person name="Sadaie Y."/>
            <person name="Sato T."/>
            <person name="Scanlan E."/>
            <person name="Schleich S."/>
            <person name="Schroeter R."/>
            <person name="Scoffone F."/>
            <person name="Sekiguchi J."/>
            <person name="Sekowska A."/>
            <person name="Seror S.J."/>
            <person name="Serror P."/>
            <person name="Shin B.-S."/>
            <person name="Soldo B."/>
            <person name="Sorokin A."/>
            <person name="Tacconi E."/>
            <person name="Takagi T."/>
            <person name="Takahashi H."/>
            <person name="Takemaru K."/>
            <person name="Takeuchi M."/>
            <person name="Tamakoshi A."/>
            <person name="Tanaka T."/>
            <person name="Terpstra P."/>
            <person name="Tognoni A."/>
            <person name="Tosato V."/>
            <person name="Uchiyama S."/>
            <person name="Vandenbol M."/>
            <person name="Vannier F."/>
            <person name="Vassarotti A."/>
            <person name="Viari A."/>
            <person name="Wambutt R."/>
            <person name="Wedler E."/>
            <person name="Wedler H."/>
            <person name="Weitzenegger T."/>
            <person name="Winters P."/>
            <person name="Wipat A."/>
            <person name="Yamamoto H."/>
            <person name="Yamane K."/>
            <person name="Yasumoto K."/>
            <person name="Yata K."/>
            <person name="Yoshida K."/>
            <person name="Yoshikawa H.-F."/>
            <person name="Zumstein E."/>
            <person name="Yoshikawa H."/>
            <person name="Danchin A."/>
        </authorList>
    </citation>
    <scope>NUCLEOTIDE SEQUENCE [LARGE SCALE GENOMIC DNA]</scope>
    <source>
        <strain>168</strain>
    </source>
</reference>
<reference key="2">
    <citation type="journal article" date="2009" name="Microbiology">
        <title>From a consortium sequence to a unified sequence: the Bacillus subtilis 168 reference genome a decade later.</title>
        <authorList>
            <person name="Barbe V."/>
            <person name="Cruveiller S."/>
            <person name="Kunst F."/>
            <person name="Lenoble P."/>
            <person name="Meurice G."/>
            <person name="Sekowska A."/>
            <person name="Vallenet D."/>
            <person name="Wang T."/>
            <person name="Moszer I."/>
            <person name="Medigue C."/>
            <person name="Danchin A."/>
        </authorList>
    </citation>
    <scope>SEQUENCE REVISION TO C-TERMINUS</scope>
</reference>
<proteinExistence type="predicted"/>
<organism>
    <name type="scientific">Bacillus subtilis (strain 168)</name>
    <dbReference type="NCBI Taxonomy" id="224308"/>
    <lineage>
        <taxon>Bacteria</taxon>
        <taxon>Bacillati</taxon>
        <taxon>Bacillota</taxon>
        <taxon>Bacilli</taxon>
        <taxon>Bacillales</taxon>
        <taxon>Bacillaceae</taxon>
        <taxon>Bacillus</taxon>
    </lineage>
</organism>
<name>YJAV_BACSU</name>
<keyword id="KW-1185">Reference proteome</keyword>
<gene>
    <name type="primary">yjaV</name>
    <name type="ordered locus">BSU11290</name>
</gene>
<sequence length="185" mass="22139">MESTLIVGADEFFGLSLCERMMDEGIHVDVVLAETEDKMRQMYLEERLMWLGRNELFRQLEHIGDQNYDTICIQFGSFLPLDQYDSPYILVYEEDRKEWDKREKTGSEKTVILPKMYGPWKEETEEDGYYTNDVADELLRFLLEPSRHSKDQLFELQVTEKTSKEEAKTKIIEWKRQFSSIFDKY</sequence>